<reference key="1">
    <citation type="journal article" date="1999" name="Microbiology">
        <title>Characterization of a vanillic acid non-oxidative decarboxylation gene cluster from Streptomyces sp. D7.</title>
        <authorList>
            <person name="Chow K.T."/>
            <person name="Pope M.K."/>
            <person name="Davies J."/>
        </authorList>
    </citation>
    <scope>NUCLEOTIDE SEQUENCE [GENOMIC DNA]</scope>
    <scope>FUNCTION</scope>
    <scope>INDUCTION</scope>
    <source>
        <strain evidence="5">D7</strain>
    </source>
</reference>
<name>PADL_STRD7</name>
<feature type="chain" id="PRO_0000444036" description="Probable UbiX-like flavin prenyltransferase">
    <location>
        <begin position="1"/>
        <end position="200"/>
    </location>
</feature>
<feature type="binding site" evidence="1">
    <location>
        <begin position="9"/>
        <end position="11"/>
    </location>
    <ligand>
        <name>FMN</name>
        <dbReference type="ChEBI" id="CHEBI:58210"/>
    </ligand>
</feature>
<feature type="binding site" evidence="1">
    <location>
        <position position="36"/>
    </location>
    <ligand>
        <name>FMN</name>
        <dbReference type="ChEBI" id="CHEBI:58210"/>
    </ligand>
</feature>
<feature type="binding site" evidence="1">
    <location>
        <begin position="87"/>
        <end position="90"/>
    </location>
    <ligand>
        <name>FMN</name>
        <dbReference type="ChEBI" id="CHEBI:58210"/>
    </ligand>
</feature>
<feature type="binding site" evidence="1">
    <location>
        <position position="122"/>
    </location>
    <ligand>
        <name>FMN</name>
        <dbReference type="ChEBI" id="CHEBI:58210"/>
    </ligand>
</feature>
<evidence type="ECO:0000255" key="1">
    <source>
        <dbReference type="HAMAP-Rule" id="MF_01986"/>
    </source>
</evidence>
<evidence type="ECO:0000269" key="2">
    <source>
    </source>
</evidence>
<evidence type="ECO:0000303" key="3">
    <source>
    </source>
</evidence>
<evidence type="ECO:0000305" key="4"/>
<evidence type="ECO:0000312" key="5">
    <source>
        <dbReference type="EMBL" id="AAD28781.1"/>
    </source>
</evidence>
<protein>
    <recommendedName>
        <fullName evidence="1">Probable UbiX-like flavin prenyltransferase</fullName>
        <ecNumber evidence="1">2.5.1.129</ecNumber>
    </recommendedName>
    <alternativeName>
        <fullName evidence="1">Phenolic acid decarboxylase subunit B</fullName>
        <shortName evidence="1">PAD</shortName>
    </alternativeName>
</protein>
<organism>
    <name type="scientific">Streptomyces sp. (strain D7)</name>
    <dbReference type="NCBI Taxonomy" id="92742"/>
    <lineage>
        <taxon>Bacteria</taxon>
        <taxon>Bacillati</taxon>
        <taxon>Actinomycetota</taxon>
        <taxon>Actinomycetes</taxon>
        <taxon>Kitasatosporales</taxon>
        <taxon>Streptomycetaceae</taxon>
        <taxon>Streptomyces</taxon>
    </lineage>
</organism>
<accession>Q9X696</accession>
<comment type="function">
    <text evidence="1 2">Involved in the non-oxidative decarboxylation and detoxification of phenolic derivatives under both aerobic and anaerobic conditions (PubMed:10517592). Flavin prenyltransferase that catalyzes the synthesis of the prenylated FMN cofactor (prenyl-FMN) for phenolic acid decarboxylase (By similarity).</text>
</comment>
<comment type="catalytic activity">
    <reaction evidence="1">
        <text>dimethylallyl phosphate + FMNH2 = prenylated FMNH2 + phosphate</text>
        <dbReference type="Rhea" id="RHEA:37743"/>
        <dbReference type="ChEBI" id="CHEBI:43474"/>
        <dbReference type="ChEBI" id="CHEBI:57618"/>
        <dbReference type="ChEBI" id="CHEBI:87467"/>
        <dbReference type="ChEBI" id="CHEBI:88052"/>
        <dbReference type="EC" id="2.5.1.129"/>
    </reaction>
</comment>
<comment type="subunit">
    <text evidence="1">Homododecamer.</text>
</comment>
<comment type="induction">
    <text evidence="2">By vanillate.</text>
</comment>
<comment type="miscellaneous">
    <text evidence="4">It is not known, if phenolic acid decarboxylase forms a complex composed of VdcB, VdcC and VdcD. The term subunit is often used in reference to the operon, however there is no experimental evidence to prove the existence of the complex.</text>
</comment>
<comment type="similarity">
    <text evidence="1">Belongs to the UbiX/PAD1 family. YclB subfamily.</text>
</comment>
<dbReference type="EC" id="2.5.1.129" evidence="1"/>
<dbReference type="EMBL" id="AF134589">
    <property type="protein sequence ID" value="AAD28781.1"/>
    <property type="molecule type" value="Genomic_DNA"/>
</dbReference>
<dbReference type="SMR" id="Q9X696"/>
<dbReference type="GO" id="GO:0016831">
    <property type="term" value="F:carboxy-lyase activity"/>
    <property type="evidence" value="ECO:0007669"/>
    <property type="project" value="TreeGrafter"/>
</dbReference>
<dbReference type="GO" id="GO:0106141">
    <property type="term" value="F:flavin prenyltransferase activity"/>
    <property type="evidence" value="ECO:0007669"/>
    <property type="project" value="UniProtKB-EC"/>
</dbReference>
<dbReference type="GO" id="GO:0009056">
    <property type="term" value="P:catabolic process"/>
    <property type="evidence" value="ECO:0007669"/>
    <property type="project" value="UniProtKB-KW"/>
</dbReference>
<dbReference type="GO" id="GO:0009636">
    <property type="term" value="P:response to toxic substance"/>
    <property type="evidence" value="ECO:0007669"/>
    <property type="project" value="UniProtKB-KW"/>
</dbReference>
<dbReference type="FunFam" id="3.40.50.1950:FF:000001">
    <property type="entry name" value="Flavin prenyltransferase UbiX"/>
    <property type="match status" value="1"/>
</dbReference>
<dbReference type="Gene3D" id="3.40.50.1950">
    <property type="entry name" value="Flavin prenyltransferase-like"/>
    <property type="match status" value="1"/>
</dbReference>
<dbReference type="HAMAP" id="MF_01984">
    <property type="entry name" value="ubiX_pad"/>
    <property type="match status" value="1"/>
</dbReference>
<dbReference type="HAMAP" id="MF_01986">
    <property type="entry name" value="ubiX_pad_yclB"/>
    <property type="match status" value="1"/>
</dbReference>
<dbReference type="InterPro" id="IPR036551">
    <property type="entry name" value="Flavin_trans-like"/>
</dbReference>
<dbReference type="InterPro" id="IPR003382">
    <property type="entry name" value="Flavoprotein"/>
</dbReference>
<dbReference type="InterPro" id="IPR004507">
    <property type="entry name" value="UbiX-like"/>
</dbReference>
<dbReference type="InterPro" id="IPR032901">
    <property type="entry name" value="UbiX_pad_YclB"/>
</dbReference>
<dbReference type="NCBIfam" id="NF004685">
    <property type="entry name" value="PRK06029.1"/>
    <property type="match status" value="1"/>
</dbReference>
<dbReference type="NCBIfam" id="TIGR00421">
    <property type="entry name" value="ubiX_pad"/>
    <property type="match status" value="1"/>
</dbReference>
<dbReference type="NCBIfam" id="NF041206">
    <property type="entry name" value="VdcB"/>
    <property type="match status" value="1"/>
</dbReference>
<dbReference type="PANTHER" id="PTHR43374">
    <property type="entry name" value="FLAVIN PRENYLTRANSFERASE"/>
    <property type="match status" value="1"/>
</dbReference>
<dbReference type="PANTHER" id="PTHR43374:SF1">
    <property type="entry name" value="FLAVIN PRENYLTRANSFERASE PAD1, MITOCHONDRIAL"/>
    <property type="match status" value="1"/>
</dbReference>
<dbReference type="Pfam" id="PF02441">
    <property type="entry name" value="Flavoprotein"/>
    <property type="match status" value="1"/>
</dbReference>
<dbReference type="SUPFAM" id="SSF52507">
    <property type="entry name" value="Homo-oligomeric flavin-containing Cys decarboxylases, HFCD"/>
    <property type="match status" value="1"/>
</dbReference>
<keyword id="KW-0058">Aromatic hydrocarbons catabolism</keyword>
<keyword id="KW-0216">Detoxification</keyword>
<keyword id="KW-0285">Flavoprotein</keyword>
<keyword id="KW-0288">FMN</keyword>
<keyword id="KW-0637">Prenyltransferase</keyword>
<keyword id="KW-0808">Transferase</keyword>
<proteinExistence type="evidence at transcript level"/>
<sequence>MRLVVGMTGATGAPFGVRLLENLRQLPGVETHLVLSRWARTTIEMETGLSVAEVSALADVTHHPEDQGATISSGSFRTDGMVIVPCSMKTLAGIRTGYAEGLVARAADVVLKERRRLVLVPRETPLSEIHLQNMLELARMGVQLVPPMPAFYNNPQTVDDIVDHVVARILDQFDLPAPAARRWAGMRAARAAARSFGDAA</sequence>
<gene>
    <name evidence="3" type="primary">vdcB</name>
</gene>